<dbReference type="EMBL" id="CP000783">
    <property type="protein sequence ID" value="ABU76807.1"/>
    <property type="molecule type" value="Genomic_DNA"/>
</dbReference>
<dbReference type="RefSeq" id="WP_007775538.1">
    <property type="nucleotide sequence ID" value="NC_009778.1"/>
</dbReference>
<dbReference type="KEGG" id="esa:ESA_01553"/>
<dbReference type="HOGENOM" id="CLU_089554_2_0_6"/>
<dbReference type="Proteomes" id="UP000000260">
    <property type="component" value="Chromosome"/>
</dbReference>
<dbReference type="GO" id="GO:0005886">
    <property type="term" value="C:plasma membrane"/>
    <property type="evidence" value="ECO:0007669"/>
    <property type="project" value="UniProtKB-SubCell"/>
</dbReference>
<dbReference type="HAMAP" id="MF_00189">
    <property type="entry name" value="YciB"/>
    <property type="match status" value="1"/>
</dbReference>
<dbReference type="InterPro" id="IPR006008">
    <property type="entry name" value="YciB"/>
</dbReference>
<dbReference type="NCBIfam" id="TIGR00997">
    <property type="entry name" value="ispZ"/>
    <property type="match status" value="1"/>
</dbReference>
<dbReference type="NCBIfam" id="NF001324">
    <property type="entry name" value="PRK00259.1-2"/>
    <property type="match status" value="1"/>
</dbReference>
<dbReference type="NCBIfam" id="NF001325">
    <property type="entry name" value="PRK00259.1-3"/>
    <property type="match status" value="1"/>
</dbReference>
<dbReference type="NCBIfam" id="NF001326">
    <property type="entry name" value="PRK00259.1-4"/>
    <property type="match status" value="1"/>
</dbReference>
<dbReference type="PANTHER" id="PTHR36917:SF1">
    <property type="entry name" value="INNER MEMBRANE-SPANNING PROTEIN YCIB"/>
    <property type="match status" value="1"/>
</dbReference>
<dbReference type="PANTHER" id="PTHR36917">
    <property type="entry name" value="INTRACELLULAR SEPTATION PROTEIN A-RELATED"/>
    <property type="match status" value="1"/>
</dbReference>
<dbReference type="Pfam" id="PF04279">
    <property type="entry name" value="IspA"/>
    <property type="match status" value="1"/>
</dbReference>
<keyword id="KW-0997">Cell inner membrane</keyword>
<keyword id="KW-1003">Cell membrane</keyword>
<keyword id="KW-0472">Membrane</keyword>
<keyword id="KW-1185">Reference proteome</keyword>
<keyword id="KW-0812">Transmembrane</keyword>
<keyword id="KW-1133">Transmembrane helix</keyword>
<accession>A7MMH0</accession>
<evidence type="ECO:0000255" key="1">
    <source>
        <dbReference type="HAMAP-Rule" id="MF_00189"/>
    </source>
</evidence>
<proteinExistence type="inferred from homology"/>
<protein>
    <recommendedName>
        <fullName evidence="1">Inner membrane-spanning protein YciB</fullName>
    </recommendedName>
</protein>
<feature type="chain" id="PRO_1000021012" description="Inner membrane-spanning protein YciB">
    <location>
        <begin position="1"/>
        <end position="178"/>
    </location>
</feature>
<feature type="transmembrane region" description="Helical" evidence="1">
    <location>
        <begin position="22"/>
        <end position="42"/>
    </location>
</feature>
<feature type="transmembrane region" description="Helical" evidence="1">
    <location>
        <begin position="50"/>
        <end position="70"/>
    </location>
</feature>
<feature type="transmembrane region" description="Helical" evidence="1">
    <location>
        <begin position="76"/>
        <end position="96"/>
    </location>
</feature>
<feature type="transmembrane region" description="Helical" evidence="1">
    <location>
        <begin position="121"/>
        <end position="141"/>
    </location>
</feature>
<feature type="transmembrane region" description="Helical" evidence="1">
    <location>
        <begin position="149"/>
        <end position="169"/>
    </location>
</feature>
<comment type="function">
    <text evidence="1">Plays a role in cell envelope biogenesis, maintenance of cell envelope integrity and membrane homeostasis.</text>
</comment>
<comment type="subcellular location">
    <subcellularLocation>
        <location evidence="1">Cell inner membrane</location>
        <topology evidence="1">Multi-pass membrane protein</topology>
    </subcellularLocation>
</comment>
<comment type="similarity">
    <text evidence="1">Belongs to the YciB family.</text>
</comment>
<name>YCIB_CROS8</name>
<sequence>MKQLLDFLPLIVFFVVYKLHDIFWATAALIVATALAVIYSWYKYRKVEKMTLVTFVLVAVFGGLTIYFHNAEFIKWKVTIIYALFAGALLIGQWVMKKPLIQSMLGKEITLPAHAWSRLNIAWALFFIFCGLLNIYVAFWLPEAVWMNFKVFGIPGLTLVFTLLSGVYIYRHMPQEEK</sequence>
<gene>
    <name evidence="1" type="primary">yciB</name>
    <name type="ordered locus">ESA_01553</name>
</gene>
<reference key="1">
    <citation type="journal article" date="2010" name="PLoS ONE">
        <title>Genome sequence of Cronobacter sakazakii BAA-894 and comparative genomic hybridization analysis with other Cronobacter species.</title>
        <authorList>
            <person name="Kucerova E."/>
            <person name="Clifton S.W."/>
            <person name="Xia X.Q."/>
            <person name="Long F."/>
            <person name="Porwollik S."/>
            <person name="Fulton L."/>
            <person name="Fronick C."/>
            <person name="Minx P."/>
            <person name="Kyung K."/>
            <person name="Warren W."/>
            <person name="Fulton R."/>
            <person name="Feng D."/>
            <person name="Wollam A."/>
            <person name="Shah N."/>
            <person name="Bhonagiri V."/>
            <person name="Nash W.E."/>
            <person name="Hallsworth-Pepin K."/>
            <person name="Wilson R.K."/>
            <person name="McClelland M."/>
            <person name="Forsythe S.J."/>
        </authorList>
    </citation>
    <scope>NUCLEOTIDE SEQUENCE [LARGE SCALE GENOMIC DNA]</scope>
    <source>
        <strain>ATCC BAA-894</strain>
    </source>
</reference>
<organism>
    <name type="scientific">Cronobacter sakazakii (strain ATCC BAA-894)</name>
    <name type="common">Enterobacter sakazakii</name>
    <dbReference type="NCBI Taxonomy" id="290339"/>
    <lineage>
        <taxon>Bacteria</taxon>
        <taxon>Pseudomonadati</taxon>
        <taxon>Pseudomonadota</taxon>
        <taxon>Gammaproteobacteria</taxon>
        <taxon>Enterobacterales</taxon>
        <taxon>Enterobacteriaceae</taxon>
        <taxon>Cronobacter</taxon>
    </lineage>
</organism>